<feature type="chain" id="PRO_1000054111" description="Cyclic pyranopterin monophosphate synthase">
    <location>
        <begin position="1"/>
        <end position="161"/>
    </location>
</feature>
<feature type="active site" evidence="1">
    <location>
        <position position="128"/>
    </location>
</feature>
<feature type="binding site" evidence="1">
    <location>
        <begin position="75"/>
        <end position="77"/>
    </location>
    <ligand>
        <name>substrate</name>
    </ligand>
</feature>
<feature type="binding site" evidence="1">
    <location>
        <begin position="113"/>
        <end position="114"/>
    </location>
    <ligand>
        <name>substrate</name>
    </ligand>
</feature>
<dbReference type="EC" id="4.6.1.17" evidence="1"/>
<dbReference type="EMBL" id="CP000284">
    <property type="protein sequence ID" value="ABE48470.1"/>
    <property type="molecule type" value="Genomic_DNA"/>
</dbReference>
<dbReference type="RefSeq" id="WP_011478567.1">
    <property type="nucleotide sequence ID" value="NC_007947.1"/>
</dbReference>
<dbReference type="SMR" id="Q1H4W7"/>
<dbReference type="STRING" id="265072.Mfla_0199"/>
<dbReference type="KEGG" id="mfa:Mfla_0199"/>
<dbReference type="eggNOG" id="COG0315">
    <property type="taxonomic scope" value="Bacteria"/>
</dbReference>
<dbReference type="HOGENOM" id="CLU_074693_1_1_4"/>
<dbReference type="OrthoDB" id="9794429at2"/>
<dbReference type="UniPathway" id="UPA00344"/>
<dbReference type="Proteomes" id="UP000002440">
    <property type="component" value="Chromosome"/>
</dbReference>
<dbReference type="GO" id="GO:0061799">
    <property type="term" value="F:cyclic pyranopterin monophosphate synthase activity"/>
    <property type="evidence" value="ECO:0007669"/>
    <property type="project" value="UniProtKB-UniRule"/>
</dbReference>
<dbReference type="GO" id="GO:0006777">
    <property type="term" value="P:Mo-molybdopterin cofactor biosynthetic process"/>
    <property type="evidence" value="ECO:0007669"/>
    <property type="project" value="UniProtKB-UniRule"/>
</dbReference>
<dbReference type="CDD" id="cd01420">
    <property type="entry name" value="MoaC_PE"/>
    <property type="match status" value="1"/>
</dbReference>
<dbReference type="Gene3D" id="3.30.70.640">
    <property type="entry name" value="Molybdopterin cofactor biosynthesis C (MoaC) domain"/>
    <property type="match status" value="1"/>
</dbReference>
<dbReference type="HAMAP" id="MF_01224_B">
    <property type="entry name" value="MoaC_B"/>
    <property type="match status" value="1"/>
</dbReference>
<dbReference type="InterPro" id="IPR023045">
    <property type="entry name" value="MoaC"/>
</dbReference>
<dbReference type="InterPro" id="IPR047594">
    <property type="entry name" value="MoaC_bact/euk"/>
</dbReference>
<dbReference type="InterPro" id="IPR036522">
    <property type="entry name" value="MoaC_sf"/>
</dbReference>
<dbReference type="InterPro" id="IPR050105">
    <property type="entry name" value="MoCo_biosynth_MoaA/MoaC"/>
</dbReference>
<dbReference type="InterPro" id="IPR002820">
    <property type="entry name" value="Mopterin_CF_biosynth-C_dom"/>
</dbReference>
<dbReference type="NCBIfam" id="TIGR00581">
    <property type="entry name" value="moaC"/>
    <property type="match status" value="1"/>
</dbReference>
<dbReference type="NCBIfam" id="NF006870">
    <property type="entry name" value="PRK09364.1"/>
    <property type="match status" value="1"/>
</dbReference>
<dbReference type="PANTHER" id="PTHR22960">
    <property type="entry name" value="MOLYBDOPTERIN COFACTOR SYNTHESIS PROTEIN A"/>
    <property type="match status" value="1"/>
</dbReference>
<dbReference type="Pfam" id="PF01967">
    <property type="entry name" value="MoaC"/>
    <property type="match status" value="1"/>
</dbReference>
<dbReference type="SUPFAM" id="SSF55040">
    <property type="entry name" value="Molybdenum cofactor biosynthesis protein C, MoaC"/>
    <property type="match status" value="1"/>
</dbReference>
<proteinExistence type="inferred from homology"/>
<accession>Q1H4W7</accession>
<reference key="1">
    <citation type="submission" date="2006-03" db="EMBL/GenBank/DDBJ databases">
        <title>Complete sequence of Methylobacillus flagellatus KT.</title>
        <authorList>
            <consortium name="US DOE Joint Genome Institute"/>
            <person name="Copeland A."/>
            <person name="Lucas S."/>
            <person name="Lapidus A."/>
            <person name="Barry K."/>
            <person name="Detter J.C."/>
            <person name="Glavina del Rio T."/>
            <person name="Hammon N."/>
            <person name="Israni S."/>
            <person name="Dalin E."/>
            <person name="Tice H."/>
            <person name="Pitluck S."/>
            <person name="Brettin T."/>
            <person name="Bruce D."/>
            <person name="Han C."/>
            <person name="Tapia R."/>
            <person name="Saunders E."/>
            <person name="Gilna P."/>
            <person name="Schmutz J."/>
            <person name="Larimer F."/>
            <person name="Land M."/>
            <person name="Kyrpides N."/>
            <person name="Anderson I."/>
            <person name="Richardson P."/>
        </authorList>
    </citation>
    <scope>NUCLEOTIDE SEQUENCE [LARGE SCALE GENOMIC DNA]</scope>
    <source>
        <strain>ATCC 51484 / DSM 6875 / VKM B-1610 / KT</strain>
    </source>
</reference>
<gene>
    <name evidence="1" type="primary">moaC</name>
    <name type="ordered locus">Mfla_0199</name>
</gene>
<sequence length="161" mass="16987">MSKLTHFDAGGQAHMVDVGEKAETRRVAVAHGSIRMLPATLSIITAGDAKKGDVLGIARIAAIQGSKRTAELIPLCHPIPLTRIGVEFSIDDAVSAVHCQVTAETVGRTGVEMEALTATSIALLTIYDMCKAVDRGMTIGEIRLLEKLGGKSGHWQAGNND</sequence>
<protein>
    <recommendedName>
        <fullName evidence="1">Cyclic pyranopterin monophosphate synthase</fullName>
        <ecNumber evidence="1">4.6.1.17</ecNumber>
    </recommendedName>
    <alternativeName>
        <fullName evidence="1">Molybdenum cofactor biosynthesis protein C</fullName>
    </alternativeName>
</protein>
<name>MOAC_METFK</name>
<comment type="function">
    <text evidence="1">Catalyzes the conversion of (8S)-3',8-cyclo-7,8-dihydroguanosine 5'-triphosphate to cyclic pyranopterin monophosphate (cPMP).</text>
</comment>
<comment type="catalytic activity">
    <reaction evidence="1">
        <text>(8S)-3',8-cyclo-7,8-dihydroguanosine 5'-triphosphate = cyclic pyranopterin phosphate + diphosphate</text>
        <dbReference type="Rhea" id="RHEA:49580"/>
        <dbReference type="ChEBI" id="CHEBI:33019"/>
        <dbReference type="ChEBI" id="CHEBI:59648"/>
        <dbReference type="ChEBI" id="CHEBI:131766"/>
        <dbReference type="EC" id="4.6.1.17"/>
    </reaction>
</comment>
<comment type="pathway">
    <text evidence="1">Cofactor biosynthesis; molybdopterin biosynthesis.</text>
</comment>
<comment type="subunit">
    <text evidence="1">Homohexamer; trimer of dimers.</text>
</comment>
<comment type="similarity">
    <text evidence="1">Belongs to the MoaC family.</text>
</comment>
<keyword id="KW-0456">Lyase</keyword>
<keyword id="KW-0501">Molybdenum cofactor biosynthesis</keyword>
<keyword id="KW-1185">Reference proteome</keyword>
<organism>
    <name type="scientific">Methylobacillus flagellatus (strain ATCC 51484 / DSM 6875 / VKM B-1610 / KT)</name>
    <dbReference type="NCBI Taxonomy" id="265072"/>
    <lineage>
        <taxon>Bacteria</taxon>
        <taxon>Pseudomonadati</taxon>
        <taxon>Pseudomonadota</taxon>
        <taxon>Betaproteobacteria</taxon>
        <taxon>Nitrosomonadales</taxon>
        <taxon>Methylophilaceae</taxon>
        <taxon>Methylobacillus</taxon>
    </lineage>
</organism>
<evidence type="ECO:0000255" key="1">
    <source>
        <dbReference type="HAMAP-Rule" id="MF_01224"/>
    </source>
</evidence>